<name>PG029_VACCC</name>
<organismHost>
    <name type="scientific">Homo sapiens</name>
    <name type="common">Human</name>
    <dbReference type="NCBI Taxonomy" id="9606"/>
</organismHost>
<gene>
    <name type="primary">OPG029</name>
    <name type="synonym">B16L</name>
    <name type="synonym">C6L</name>
    <name type="synonym">D12L</name>
    <name type="synonym">D9L</name>
</gene>
<dbReference type="EMBL" id="M35027">
    <property type="protein sequence ID" value="AAA47994.1"/>
    <property type="molecule type" value="Genomic_DNA"/>
</dbReference>
<dbReference type="PIR" id="H42503">
    <property type="entry name" value="H42503"/>
</dbReference>
<dbReference type="SMR" id="P21040"/>
<dbReference type="Proteomes" id="UP000008269">
    <property type="component" value="Segment"/>
</dbReference>
<dbReference type="FunFam" id="1.10.437.20:FF:000002">
    <property type="entry name" value="Protein C6"/>
    <property type="match status" value="1"/>
</dbReference>
<dbReference type="Gene3D" id="1.10.437.20">
    <property type="entry name" value="dsDNA poxvirus"/>
    <property type="match status" value="1"/>
</dbReference>
<dbReference type="InterPro" id="IPR022819">
    <property type="entry name" value="Poxvirus_Bcl-2-like"/>
</dbReference>
<dbReference type="InterPro" id="IPR043018">
    <property type="entry name" value="Poxvirus_sf"/>
</dbReference>
<dbReference type="Pfam" id="PF06227">
    <property type="entry name" value="Poxv_Bcl-2-like"/>
    <property type="match status" value="1"/>
</dbReference>
<accession>P21040</accession>
<feature type="chain" id="PRO_0000099383" description="IFN signaling evasion protein OPG029">
    <location>
        <begin position="1"/>
        <end position="151"/>
    </location>
</feature>
<comment type="function">
    <text evidence="1">Prevents establishment of cellular antiviral state by blocking virus-induced phosphorylation and activation of interferon regulatory factors 3/IRF3 and 7/IRF7, transcription factors critical for the induction of interferons alpha and beta. This blockage is produced through the inhibition of host TBK1, by binding host TBK1 adapter proteins TBKBP1 and AZI2, thereby producing a strong inhibition of the phosphorylation and activation of IRF3 and IRF7. Also acts as an inhibitor of the cellular response to type I IFN by interacting with host STAT2. Mechanistically, exerts its inhibitory effect after host ISGF3 complex (composed of STAT1, STAT2 and IRF9) binding to the interferon stimulated response element (ISRE).</text>
</comment>
<comment type="subunit">
    <text evidence="1">Interacts with host TANK, TBKBP1 and AZI2; these interactions prevent interferon production. Interacts with host STAT2.</text>
</comment>
<comment type="induction">
    <text evidence="1">Expressed in the early phase of the viral replicative cycle.</text>
</comment>
<comment type="similarity">
    <text evidence="2">Belongs to the orthopoxvirus OPG029 family.</text>
</comment>
<evidence type="ECO:0000250" key="1">
    <source>
        <dbReference type="UniProtKB" id="P17362"/>
    </source>
</evidence>
<evidence type="ECO:0000305" key="2"/>
<reference key="1">
    <citation type="journal article" date="1990" name="Virology">
        <title>The complete DNA sequence of vaccinia virus.</title>
        <authorList>
            <person name="Goebel S.J."/>
            <person name="Johnson G.P."/>
            <person name="Perkus M.E."/>
            <person name="Davis S.W."/>
            <person name="Winslow J.P."/>
            <person name="Paoletti E."/>
        </authorList>
    </citation>
    <scope>NUCLEOTIDE SEQUENCE [LARGE SCALE GENOMIC DNA]</scope>
</reference>
<reference key="2">
    <citation type="journal article" date="1990" name="Virology">
        <title>Appendix to 'The complete DNA sequence of vaccinia virus'.</title>
        <authorList>
            <person name="Goebel S.J."/>
            <person name="Johnson G.P."/>
            <person name="Perkus M.E."/>
            <person name="Davis S.W."/>
            <person name="Winslow J.P."/>
            <person name="Paoletti E."/>
        </authorList>
    </citation>
    <scope>NUCLEOTIDE SEQUENCE [LARGE SCALE GENOMIC DNA]</scope>
</reference>
<organism>
    <name type="scientific">Vaccinia virus (strain Copenhagen)</name>
    <name type="common">VACV</name>
    <dbReference type="NCBI Taxonomy" id="10249"/>
    <lineage>
        <taxon>Viruses</taxon>
        <taxon>Varidnaviria</taxon>
        <taxon>Bamfordvirae</taxon>
        <taxon>Nucleocytoviricota</taxon>
        <taxon>Pokkesviricetes</taxon>
        <taxon>Chitovirales</taxon>
        <taxon>Poxviridae</taxon>
        <taxon>Chordopoxvirinae</taxon>
        <taxon>Orthopoxvirus</taxon>
        <taxon>Vaccinia virus</taxon>
    </lineage>
</organism>
<protein>
    <recommendedName>
        <fullName>IFN signaling evasion protein OPG029</fullName>
    </recommendedName>
</protein>
<sequence length="151" mass="17367">MNAYNKADSFSLESDSIKDVIHDYICWLSMTDEMRPSIGNVFKAMETFKIDAVRYYDGNIYDLAKDINAMSFDSFIRSLQNISSKKDKLTVYGTMGLLSIVVDINKGCDISNIKFAAGIIILMEYIFDDTDMSHLKVALYRRIQRRDDVDR</sequence>
<keyword id="KW-0244">Early protein</keyword>
<keyword id="KW-1185">Reference proteome</keyword>
<proteinExistence type="inferred from homology"/>